<name>OR45A_DROME</name>
<protein>
    <recommendedName>
        <fullName>Odorant receptor 45a</fullName>
    </recommendedName>
</protein>
<comment type="function">
    <text evidence="3 4 5">Odorant receptor which mediates acceptance or avoidance behavior, depending on its substrates. The odorant receptor repertoire encodes a large collection of odor stimuli that vary widely in identity, intensity, and duration. May form a complex with Orco to form odorant-sensing units, providing sensitive and prolonged odorant signaling and calcium permeability. Involved in the behavioral responses to hexanol, pentyl acetate, benzyl acetate, and 2-heptanone.</text>
</comment>
<comment type="subunit">
    <text evidence="1">Interacts with Orco. Complexes exist early in the endomembrane system in olfactory sensory neurons (OSNs), coupling these complexes to the conserved ciliary trafficking pathway (By similarity).</text>
</comment>
<comment type="subcellular location">
    <subcellularLocation>
        <location evidence="1">Cell membrane</location>
        <topology evidence="1">Multi-pass membrane protein</topology>
    </subcellularLocation>
</comment>
<comment type="miscellaneous">
    <text>The atypical heteromeric and topological design of the odorant receptors appears to be an insect-specific solution for odor recognition, making the OR/Orco complex an attractive target for the development of highly selective insect repellents to disrupt olfactory-mediated host-seeking behaviors of insect disease vectors. Odor-evoked OR currents are independent of known G-protein-coupled second messenger pathways.</text>
</comment>
<comment type="similarity">
    <text evidence="6">Belongs to the insect chemoreceptor superfamily. Heteromeric odorant receptor channel (TC 1.A.69) family. Or1a subfamily.</text>
</comment>
<gene>
    <name type="primary">Or45a</name>
    <name type="ORF">CG1978</name>
</gene>
<evidence type="ECO:0000250" key="1"/>
<evidence type="ECO:0000255" key="2"/>
<evidence type="ECO:0000269" key="3">
    <source>
    </source>
</evidence>
<evidence type="ECO:0000269" key="4">
    <source>
    </source>
</evidence>
<evidence type="ECO:0000269" key="5">
    <source>
    </source>
</evidence>
<evidence type="ECO:0000305" key="6"/>
<sequence length="378" mass="43339">MDASYFAVQRRALEIVGFDPSTPQLSLKHPIWAGILILSLISHNWPMVVYALQDLSDLTRLTDNFAVFMQGSQSTFKFLVMMAKRRRIGSLIHRLHKLNQAASATPNHLEKIERENQLDRYVARSFRNAAYGVICASAIAPMLLGLWGYVETGVFTPTTPMEFNFWLDERKPHFYWPIYVWGVLGVAAAAWLAIATDTLFSWLTHNVVIQFQLLELVLEEKDLNGGDSRLTGFVSRHRIALDLAKELSSIFGEIVFVKYMLSYLQLCMLAFRFSRSGWSAQVPFRATFLVAIIIQLSSYCYGGEYIKQQSLAIAQAVYGQINWPEMTPKKRRLWQMVIMRAQRPAKIFGFMFVVDLPLLLWVIRTAGSFLAMLRTFER</sequence>
<proteinExistence type="inferred from homology"/>
<feature type="chain" id="PRO_0000174246" description="Odorant receptor 45a">
    <location>
        <begin position="1"/>
        <end position="378"/>
    </location>
</feature>
<feature type="topological domain" description="Cytoplasmic" evidence="2">
    <location>
        <begin position="1"/>
        <end position="30"/>
    </location>
</feature>
<feature type="transmembrane region" description="Helical; Name=1" evidence="2">
    <location>
        <begin position="31"/>
        <end position="51"/>
    </location>
</feature>
<feature type="topological domain" description="Extracellular" evidence="2">
    <location>
        <begin position="52"/>
        <end position="129"/>
    </location>
</feature>
<feature type="transmembrane region" description="Helical; Name=2" evidence="2">
    <location>
        <begin position="130"/>
        <end position="150"/>
    </location>
</feature>
<feature type="topological domain" description="Cytoplasmic" evidence="2">
    <location>
        <begin position="151"/>
        <end position="173"/>
    </location>
</feature>
<feature type="transmembrane region" description="Helical; Name=3" evidence="2">
    <location>
        <begin position="174"/>
        <end position="194"/>
    </location>
</feature>
<feature type="topological domain" description="Extracellular" evidence="2">
    <location>
        <begin position="195"/>
        <end position="197"/>
    </location>
</feature>
<feature type="transmembrane region" description="Helical; Name=4" evidence="2">
    <location>
        <begin position="198"/>
        <end position="218"/>
    </location>
</feature>
<feature type="topological domain" description="Cytoplasmic" evidence="2">
    <location>
        <begin position="219"/>
        <end position="249"/>
    </location>
</feature>
<feature type="transmembrane region" description="Helical; Name=5" evidence="2">
    <location>
        <begin position="250"/>
        <end position="270"/>
    </location>
</feature>
<feature type="topological domain" description="Extracellular" evidence="2">
    <location>
        <begin position="271"/>
        <end position="285"/>
    </location>
</feature>
<feature type="transmembrane region" description="Helical; Name=6" evidence="2">
    <location>
        <begin position="286"/>
        <end position="306"/>
    </location>
</feature>
<feature type="topological domain" description="Cytoplasmic" evidence="2">
    <location>
        <begin position="307"/>
        <end position="342"/>
    </location>
</feature>
<feature type="transmembrane region" description="Helical; Name=7" evidence="2">
    <location>
        <begin position="343"/>
        <end position="363"/>
    </location>
</feature>
<feature type="topological domain" description="Extracellular" evidence="2">
    <location>
        <begin position="364"/>
        <end position="378"/>
    </location>
</feature>
<keyword id="KW-1003">Cell membrane</keyword>
<keyword id="KW-0472">Membrane</keyword>
<keyword id="KW-0552">Olfaction</keyword>
<keyword id="KW-0675">Receptor</keyword>
<keyword id="KW-1185">Reference proteome</keyword>
<keyword id="KW-0716">Sensory transduction</keyword>
<keyword id="KW-0807">Transducer</keyword>
<keyword id="KW-0812">Transmembrane</keyword>
<keyword id="KW-1133">Transmembrane helix</keyword>
<organism>
    <name type="scientific">Drosophila melanogaster</name>
    <name type="common">Fruit fly</name>
    <dbReference type="NCBI Taxonomy" id="7227"/>
    <lineage>
        <taxon>Eukaryota</taxon>
        <taxon>Metazoa</taxon>
        <taxon>Ecdysozoa</taxon>
        <taxon>Arthropoda</taxon>
        <taxon>Hexapoda</taxon>
        <taxon>Insecta</taxon>
        <taxon>Pterygota</taxon>
        <taxon>Neoptera</taxon>
        <taxon>Endopterygota</taxon>
        <taxon>Diptera</taxon>
        <taxon>Brachycera</taxon>
        <taxon>Muscomorpha</taxon>
        <taxon>Ephydroidea</taxon>
        <taxon>Drosophilidae</taxon>
        <taxon>Drosophila</taxon>
        <taxon>Sophophora</taxon>
    </lineage>
</organism>
<reference key="1">
    <citation type="journal article" date="2000" name="Science">
        <title>The genome sequence of Drosophila melanogaster.</title>
        <authorList>
            <person name="Adams M.D."/>
            <person name="Celniker S.E."/>
            <person name="Holt R.A."/>
            <person name="Evans C.A."/>
            <person name="Gocayne J.D."/>
            <person name="Amanatides P.G."/>
            <person name="Scherer S.E."/>
            <person name="Li P.W."/>
            <person name="Hoskins R.A."/>
            <person name="Galle R.F."/>
            <person name="George R.A."/>
            <person name="Lewis S.E."/>
            <person name="Richards S."/>
            <person name="Ashburner M."/>
            <person name="Henderson S.N."/>
            <person name="Sutton G.G."/>
            <person name="Wortman J.R."/>
            <person name="Yandell M.D."/>
            <person name="Zhang Q."/>
            <person name="Chen L.X."/>
            <person name="Brandon R.C."/>
            <person name="Rogers Y.-H.C."/>
            <person name="Blazej R.G."/>
            <person name="Champe M."/>
            <person name="Pfeiffer B.D."/>
            <person name="Wan K.H."/>
            <person name="Doyle C."/>
            <person name="Baxter E.G."/>
            <person name="Helt G."/>
            <person name="Nelson C.R."/>
            <person name="Miklos G.L.G."/>
            <person name="Abril J.F."/>
            <person name="Agbayani A."/>
            <person name="An H.-J."/>
            <person name="Andrews-Pfannkoch C."/>
            <person name="Baldwin D."/>
            <person name="Ballew R.M."/>
            <person name="Basu A."/>
            <person name="Baxendale J."/>
            <person name="Bayraktaroglu L."/>
            <person name="Beasley E.M."/>
            <person name="Beeson K.Y."/>
            <person name="Benos P.V."/>
            <person name="Berman B.P."/>
            <person name="Bhandari D."/>
            <person name="Bolshakov S."/>
            <person name="Borkova D."/>
            <person name="Botchan M.R."/>
            <person name="Bouck J."/>
            <person name="Brokstein P."/>
            <person name="Brottier P."/>
            <person name="Burtis K.C."/>
            <person name="Busam D.A."/>
            <person name="Butler H."/>
            <person name="Cadieu E."/>
            <person name="Center A."/>
            <person name="Chandra I."/>
            <person name="Cherry J.M."/>
            <person name="Cawley S."/>
            <person name="Dahlke C."/>
            <person name="Davenport L.B."/>
            <person name="Davies P."/>
            <person name="de Pablos B."/>
            <person name="Delcher A."/>
            <person name="Deng Z."/>
            <person name="Mays A.D."/>
            <person name="Dew I."/>
            <person name="Dietz S.M."/>
            <person name="Dodson K."/>
            <person name="Doup L.E."/>
            <person name="Downes M."/>
            <person name="Dugan-Rocha S."/>
            <person name="Dunkov B.C."/>
            <person name="Dunn P."/>
            <person name="Durbin K.J."/>
            <person name="Evangelista C.C."/>
            <person name="Ferraz C."/>
            <person name="Ferriera S."/>
            <person name="Fleischmann W."/>
            <person name="Fosler C."/>
            <person name="Gabrielian A.E."/>
            <person name="Garg N.S."/>
            <person name="Gelbart W.M."/>
            <person name="Glasser K."/>
            <person name="Glodek A."/>
            <person name="Gong F."/>
            <person name="Gorrell J.H."/>
            <person name="Gu Z."/>
            <person name="Guan P."/>
            <person name="Harris M."/>
            <person name="Harris N.L."/>
            <person name="Harvey D.A."/>
            <person name="Heiman T.J."/>
            <person name="Hernandez J.R."/>
            <person name="Houck J."/>
            <person name="Hostin D."/>
            <person name="Houston K.A."/>
            <person name="Howland T.J."/>
            <person name="Wei M.-H."/>
            <person name="Ibegwam C."/>
            <person name="Jalali M."/>
            <person name="Kalush F."/>
            <person name="Karpen G.H."/>
            <person name="Ke Z."/>
            <person name="Kennison J.A."/>
            <person name="Ketchum K.A."/>
            <person name="Kimmel B.E."/>
            <person name="Kodira C.D."/>
            <person name="Kraft C.L."/>
            <person name="Kravitz S."/>
            <person name="Kulp D."/>
            <person name="Lai Z."/>
            <person name="Lasko P."/>
            <person name="Lei Y."/>
            <person name="Levitsky A.A."/>
            <person name="Li J.H."/>
            <person name="Li Z."/>
            <person name="Liang Y."/>
            <person name="Lin X."/>
            <person name="Liu X."/>
            <person name="Mattei B."/>
            <person name="McIntosh T.C."/>
            <person name="McLeod M.P."/>
            <person name="McPherson D."/>
            <person name="Merkulov G."/>
            <person name="Milshina N.V."/>
            <person name="Mobarry C."/>
            <person name="Morris J."/>
            <person name="Moshrefi A."/>
            <person name="Mount S.M."/>
            <person name="Moy M."/>
            <person name="Murphy B."/>
            <person name="Murphy L."/>
            <person name="Muzny D.M."/>
            <person name="Nelson D.L."/>
            <person name="Nelson D.R."/>
            <person name="Nelson K.A."/>
            <person name="Nixon K."/>
            <person name="Nusskern D.R."/>
            <person name="Pacleb J.M."/>
            <person name="Palazzolo M."/>
            <person name="Pittman G.S."/>
            <person name="Pan S."/>
            <person name="Pollard J."/>
            <person name="Puri V."/>
            <person name="Reese M.G."/>
            <person name="Reinert K."/>
            <person name="Remington K."/>
            <person name="Saunders R.D.C."/>
            <person name="Scheeler F."/>
            <person name="Shen H."/>
            <person name="Shue B.C."/>
            <person name="Siden-Kiamos I."/>
            <person name="Simpson M."/>
            <person name="Skupski M.P."/>
            <person name="Smith T.J."/>
            <person name="Spier E."/>
            <person name="Spradling A.C."/>
            <person name="Stapleton M."/>
            <person name="Strong R."/>
            <person name="Sun E."/>
            <person name="Svirskas R."/>
            <person name="Tector C."/>
            <person name="Turner R."/>
            <person name="Venter E."/>
            <person name="Wang A.H."/>
            <person name="Wang X."/>
            <person name="Wang Z.-Y."/>
            <person name="Wassarman D.A."/>
            <person name="Weinstock G.M."/>
            <person name="Weissenbach J."/>
            <person name="Williams S.M."/>
            <person name="Woodage T."/>
            <person name="Worley K.C."/>
            <person name="Wu D."/>
            <person name="Yang S."/>
            <person name="Yao Q.A."/>
            <person name="Ye J."/>
            <person name="Yeh R.-F."/>
            <person name="Zaveri J.S."/>
            <person name="Zhan M."/>
            <person name="Zhang G."/>
            <person name="Zhao Q."/>
            <person name="Zheng L."/>
            <person name="Zheng X.H."/>
            <person name="Zhong F.N."/>
            <person name="Zhong W."/>
            <person name="Zhou X."/>
            <person name="Zhu S.C."/>
            <person name="Zhu X."/>
            <person name="Smith H.O."/>
            <person name="Gibbs R.A."/>
            <person name="Myers E.W."/>
            <person name="Rubin G.M."/>
            <person name="Venter J.C."/>
        </authorList>
    </citation>
    <scope>NUCLEOTIDE SEQUENCE [LARGE SCALE GENOMIC DNA]</scope>
    <source>
        <strain>Berkeley</strain>
    </source>
</reference>
<reference key="2">
    <citation type="journal article" date="2002" name="Genome Biol.">
        <title>Annotation of the Drosophila melanogaster euchromatic genome: a systematic review.</title>
        <authorList>
            <person name="Misra S."/>
            <person name="Crosby M.A."/>
            <person name="Mungall C.J."/>
            <person name="Matthews B.B."/>
            <person name="Campbell K.S."/>
            <person name="Hradecky P."/>
            <person name="Huang Y."/>
            <person name="Kaminker J.S."/>
            <person name="Millburn G.H."/>
            <person name="Prochnik S.E."/>
            <person name="Smith C.D."/>
            <person name="Tupy J.L."/>
            <person name="Whitfield E.J."/>
            <person name="Bayraktaroglu L."/>
            <person name="Berman B.P."/>
            <person name="Bettencourt B.R."/>
            <person name="Celniker S.E."/>
            <person name="de Grey A.D.N.J."/>
            <person name="Drysdale R.A."/>
            <person name="Harris N.L."/>
            <person name="Richter J."/>
            <person name="Russo S."/>
            <person name="Schroeder A.J."/>
            <person name="Shu S.Q."/>
            <person name="Stapleton M."/>
            <person name="Yamada C."/>
            <person name="Ashburner M."/>
            <person name="Gelbart W.M."/>
            <person name="Rubin G.M."/>
            <person name="Lewis S.E."/>
        </authorList>
    </citation>
    <scope>GENOME REANNOTATION</scope>
    <source>
        <strain>Berkeley</strain>
    </source>
</reference>
<reference key="3">
    <citation type="journal article" date="2010" name="Front. Behav. Neurosci.">
        <title>Optogenetically induced olfactory stimulation in Drosophila larvae reveals the neuronal basis of odor-aversion behavior.</title>
        <authorList>
            <person name="Bellmann D."/>
            <person name="Richardt A."/>
            <person name="Freyberger R."/>
            <person name="Nuwal N."/>
            <person name="Schwarzel M."/>
            <person name="Fiala A."/>
            <person name="Stortkuhl K.F."/>
        </authorList>
    </citation>
    <scope>FUNCTION</scope>
</reference>
<reference key="4">
    <citation type="journal article" date="2011" name="J. Neurosci.">
        <title>Similar odorants elicit different behavioral and physiological responses, some supersustained.</title>
        <authorList>
            <person name="Montague S.A."/>
            <person name="Mathew D."/>
            <person name="Carlson J.R."/>
        </authorList>
    </citation>
    <scope>FUNCTION</scope>
</reference>
<reference key="5">
    <citation type="journal article" date="2011" name="PLoS ONE">
        <title>Modeling peripheral olfactory coding in Drosophila larvae.</title>
        <authorList>
            <person name="Hoare D.J."/>
            <person name="Humble J."/>
            <person name="Jin D."/>
            <person name="Gilding N."/>
            <person name="Petersen R."/>
            <person name="Cobb M."/>
            <person name="McCrohan C."/>
        </authorList>
    </citation>
    <scope>FUNCTION</scope>
</reference>
<accession>Q9V568</accession>
<dbReference type="EMBL" id="AE013599">
    <property type="protein sequence ID" value="AAF58951.3"/>
    <property type="molecule type" value="Genomic_DNA"/>
</dbReference>
<dbReference type="RefSeq" id="NP_523666.3">
    <property type="nucleotide sequence ID" value="NM_078942.4"/>
</dbReference>
<dbReference type="SMR" id="Q9V568"/>
<dbReference type="BioGRID" id="61794">
    <property type="interactions" value="3"/>
</dbReference>
<dbReference type="FunCoup" id="Q9V568">
    <property type="interactions" value="19"/>
</dbReference>
<dbReference type="IntAct" id="Q9V568">
    <property type="interactions" value="3"/>
</dbReference>
<dbReference type="STRING" id="7227.FBpp0087587"/>
<dbReference type="PaxDb" id="7227-FBpp0087587"/>
<dbReference type="DNASU" id="35958"/>
<dbReference type="EnsemblMetazoa" id="FBtr0088503">
    <property type="protein sequence ID" value="FBpp0087587"/>
    <property type="gene ID" value="FBgn0033404"/>
</dbReference>
<dbReference type="GeneID" id="35958"/>
<dbReference type="KEGG" id="dme:Dmel_CG1978"/>
<dbReference type="AGR" id="FB:FBgn0033404"/>
<dbReference type="CTD" id="35958"/>
<dbReference type="FlyBase" id="FBgn0033404">
    <property type="gene designation" value="Or45a"/>
</dbReference>
<dbReference type="VEuPathDB" id="VectorBase:FBgn0033404"/>
<dbReference type="eggNOG" id="ENOG502SSPN">
    <property type="taxonomic scope" value="Eukaryota"/>
</dbReference>
<dbReference type="GeneTree" id="ENSGT00940000168837"/>
<dbReference type="HOGENOM" id="CLU_033399_7_1_1"/>
<dbReference type="InParanoid" id="Q9V568"/>
<dbReference type="OMA" id="SHNWPMV"/>
<dbReference type="OrthoDB" id="6597368at2759"/>
<dbReference type="PhylomeDB" id="Q9V568"/>
<dbReference type="BioGRID-ORCS" id="35958">
    <property type="hits" value="0 hits in 1 CRISPR screen"/>
</dbReference>
<dbReference type="GenomeRNAi" id="35958"/>
<dbReference type="PRO" id="PR:Q9V568"/>
<dbReference type="Proteomes" id="UP000000803">
    <property type="component" value="Chromosome 2R"/>
</dbReference>
<dbReference type="Bgee" id="FBgn0033404">
    <property type="expression patterns" value="Expressed in lamina monopolar neuron L2 (Drosophila) in insect head and 78 other cell types or tissues"/>
</dbReference>
<dbReference type="ExpressionAtlas" id="Q9V568">
    <property type="expression patterns" value="baseline and differential"/>
</dbReference>
<dbReference type="GO" id="GO:0034703">
    <property type="term" value="C:cation channel complex"/>
    <property type="evidence" value="ECO:0000250"/>
    <property type="project" value="FlyBase"/>
</dbReference>
<dbReference type="GO" id="GO:0032590">
    <property type="term" value="C:dendrite membrane"/>
    <property type="evidence" value="ECO:0000250"/>
    <property type="project" value="FlyBase"/>
</dbReference>
<dbReference type="GO" id="GO:0005886">
    <property type="term" value="C:plasma membrane"/>
    <property type="evidence" value="ECO:0000250"/>
    <property type="project" value="FlyBase"/>
</dbReference>
<dbReference type="GO" id="GO:0170020">
    <property type="term" value="F:ionotropic olfactory receptor activity"/>
    <property type="evidence" value="ECO:0000250"/>
    <property type="project" value="FlyBase"/>
</dbReference>
<dbReference type="GO" id="GO:0005549">
    <property type="term" value="F:odorant binding"/>
    <property type="evidence" value="ECO:0000250"/>
    <property type="project" value="FlyBase"/>
</dbReference>
<dbReference type="GO" id="GO:0004984">
    <property type="term" value="F:olfactory receptor activity"/>
    <property type="evidence" value="ECO:0000318"/>
    <property type="project" value="GO_Central"/>
</dbReference>
<dbReference type="GO" id="GO:0050911">
    <property type="term" value="P:detection of chemical stimulus involved in sensory perception of smell"/>
    <property type="evidence" value="ECO:0000315"/>
    <property type="project" value="FlyBase"/>
</dbReference>
<dbReference type="GO" id="GO:0007165">
    <property type="term" value="P:signal transduction"/>
    <property type="evidence" value="ECO:0007669"/>
    <property type="project" value="UniProtKB-KW"/>
</dbReference>
<dbReference type="InterPro" id="IPR004117">
    <property type="entry name" value="7tm6_olfct_rcpt"/>
</dbReference>
<dbReference type="PANTHER" id="PTHR21137">
    <property type="entry name" value="ODORANT RECEPTOR"/>
    <property type="match status" value="1"/>
</dbReference>
<dbReference type="PANTHER" id="PTHR21137:SF35">
    <property type="entry name" value="ODORANT RECEPTOR 19A-RELATED"/>
    <property type="match status" value="1"/>
</dbReference>
<dbReference type="Pfam" id="PF02949">
    <property type="entry name" value="7tm_6"/>
    <property type="match status" value="1"/>
</dbReference>